<accession>Q16BG8</accession>
<gene>
    <name evidence="1" type="primary">rplT</name>
    <name type="ordered locus">RD1_1010</name>
</gene>
<keyword id="KW-1185">Reference proteome</keyword>
<keyword id="KW-0687">Ribonucleoprotein</keyword>
<keyword id="KW-0689">Ribosomal protein</keyword>
<keyword id="KW-0694">RNA-binding</keyword>
<keyword id="KW-0699">rRNA-binding</keyword>
<comment type="function">
    <text evidence="1">Binds directly to 23S ribosomal RNA and is necessary for the in vitro assembly process of the 50S ribosomal subunit. It is not involved in the protein synthesizing functions of that subunit.</text>
</comment>
<comment type="similarity">
    <text evidence="1">Belongs to the bacterial ribosomal protein bL20 family.</text>
</comment>
<organism>
    <name type="scientific">Roseobacter denitrificans (strain ATCC 33942 / OCh 114)</name>
    <name type="common">Erythrobacter sp. (strain OCh 114)</name>
    <name type="synonym">Roseobacter denitrificans</name>
    <dbReference type="NCBI Taxonomy" id="375451"/>
    <lineage>
        <taxon>Bacteria</taxon>
        <taxon>Pseudomonadati</taxon>
        <taxon>Pseudomonadota</taxon>
        <taxon>Alphaproteobacteria</taxon>
        <taxon>Rhodobacterales</taxon>
        <taxon>Roseobacteraceae</taxon>
        <taxon>Roseobacter</taxon>
    </lineage>
</organism>
<evidence type="ECO:0000255" key="1">
    <source>
        <dbReference type="HAMAP-Rule" id="MF_00382"/>
    </source>
</evidence>
<evidence type="ECO:0000305" key="2"/>
<name>RL20_ROSDO</name>
<sequence length="121" mass="13619">MSRTKGGTVTHARHKKVIKAAKGYYGRRKSTFKVARQAVDKANQYATRDRKNRKRNFRALWIQRINAAVRSHDEALTYSRFINGLNLAGIEVDRKVLADLAVHEPEAFGAIVKQAQDALAA</sequence>
<feature type="chain" id="PRO_1000049058" description="Large ribosomal subunit protein bL20">
    <location>
        <begin position="1"/>
        <end position="121"/>
    </location>
</feature>
<reference key="1">
    <citation type="journal article" date="2007" name="J. Bacteriol.">
        <title>The complete genome sequence of Roseobacter denitrificans reveals a mixotrophic rather than photosynthetic metabolism.</title>
        <authorList>
            <person name="Swingley W.D."/>
            <person name="Sadekar S."/>
            <person name="Mastrian S.D."/>
            <person name="Matthies H.J."/>
            <person name="Hao J."/>
            <person name="Ramos H."/>
            <person name="Acharya C.R."/>
            <person name="Conrad A.L."/>
            <person name="Taylor H.L."/>
            <person name="Dejesa L.C."/>
            <person name="Shah M.K."/>
            <person name="O'Huallachain M.E."/>
            <person name="Lince M.T."/>
            <person name="Blankenship R.E."/>
            <person name="Beatty J.T."/>
            <person name="Touchman J.W."/>
        </authorList>
    </citation>
    <scope>NUCLEOTIDE SEQUENCE [LARGE SCALE GENOMIC DNA]</scope>
    <source>
        <strain>ATCC 33942 / OCh 114</strain>
    </source>
</reference>
<protein>
    <recommendedName>
        <fullName evidence="1">Large ribosomal subunit protein bL20</fullName>
    </recommendedName>
    <alternativeName>
        <fullName evidence="2">50S ribosomal protein L20</fullName>
    </alternativeName>
</protein>
<proteinExistence type="inferred from homology"/>
<dbReference type="EMBL" id="CP000362">
    <property type="protein sequence ID" value="ABG30675.1"/>
    <property type="molecule type" value="Genomic_DNA"/>
</dbReference>
<dbReference type="RefSeq" id="WP_011567297.1">
    <property type="nucleotide sequence ID" value="NC_008209.1"/>
</dbReference>
<dbReference type="SMR" id="Q16BG8"/>
<dbReference type="STRING" id="375451.RD1_1010"/>
<dbReference type="KEGG" id="rde:RD1_1010"/>
<dbReference type="eggNOG" id="COG0292">
    <property type="taxonomic scope" value="Bacteria"/>
</dbReference>
<dbReference type="HOGENOM" id="CLU_123265_0_1_5"/>
<dbReference type="OrthoDB" id="9808966at2"/>
<dbReference type="Proteomes" id="UP000007029">
    <property type="component" value="Chromosome"/>
</dbReference>
<dbReference type="GO" id="GO:1990904">
    <property type="term" value="C:ribonucleoprotein complex"/>
    <property type="evidence" value="ECO:0007669"/>
    <property type="project" value="UniProtKB-KW"/>
</dbReference>
<dbReference type="GO" id="GO:0005840">
    <property type="term" value="C:ribosome"/>
    <property type="evidence" value="ECO:0007669"/>
    <property type="project" value="UniProtKB-KW"/>
</dbReference>
<dbReference type="GO" id="GO:0019843">
    <property type="term" value="F:rRNA binding"/>
    <property type="evidence" value="ECO:0007669"/>
    <property type="project" value="UniProtKB-UniRule"/>
</dbReference>
<dbReference type="GO" id="GO:0003735">
    <property type="term" value="F:structural constituent of ribosome"/>
    <property type="evidence" value="ECO:0007669"/>
    <property type="project" value="InterPro"/>
</dbReference>
<dbReference type="GO" id="GO:0000027">
    <property type="term" value="P:ribosomal large subunit assembly"/>
    <property type="evidence" value="ECO:0007669"/>
    <property type="project" value="UniProtKB-UniRule"/>
</dbReference>
<dbReference type="GO" id="GO:0006412">
    <property type="term" value="P:translation"/>
    <property type="evidence" value="ECO:0007669"/>
    <property type="project" value="InterPro"/>
</dbReference>
<dbReference type="CDD" id="cd07026">
    <property type="entry name" value="Ribosomal_L20"/>
    <property type="match status" value="1"/>
</dbReference>
<dbReference type="FunFam" id="1.10.1900.20:FF:000001">
    <property type="entry name" value="50S ribosomal protein L20"/>
    <property type="match status" value="1"/>
</dbReference>
<dbReference type="Gene3D" id="6.10.160.10">
    <property type="match status" value="1"/>
</dbReference>
<dbReference type="Gene3D" id="1.10.1900.20">
    <property type="entry name" value="Ribosomal protein L20"/>
    <property type="match status" value="1"/>
</dbReference>
<dbReference type="HAMAP" id="MF_00382">
    <property type="entry name" value="Ribosomal_bL20"/>
    <property type="match status" value="1"/>
</dbReference>
<dbReference type="InterPro" id="IPR005813">
    <property type="entry name" value="Ribosomal_bL20"/>
</dbReference>
<dbReference type="InterPro" id="IPR049946">
    <property type="entry name" value="RIBOSOMAL_L20_CS"/>
</dbReference>
<dbReference type="InterPro" id="IPR035566">
    <property type="entry name" value="Ribosomal_protein_bL20_C"/>
</dbReference>
<dbReference type="NCBIfam" id="TIGR01032">
    <property type="entry name" value="rplT_bact"/>
    <property type="match status" value="1"/>
</dbReference>
<dbReference type="PANTHER" id="PTHR10986">
    <property type="entry name" value="39S RIBOSOMAL PROTEIN L20"/>
    <property type="match status" value="1"/>
</dbReference>
<dbReference type="Pfam" id="PF00453">
    <property type="entry name" value="Ribosomal_L20"/>
    <property type="match status" value="1"/>
</dbReference>
<dbReference type="PRINTS" id="PR00062">
    <property type="entry name" value="RIBOSOMALL20"/>
</dbReference>
<dbReference type="SUPFAM" id="SSF74731">
    <property type="entry name" value="Ribosomal protein L20"/>
    <property type="match status" value="1"/>
</dbReference>
<dbReference type="PROSITE" id="PS00937">
    <property type="entry name" value="RIBOSOMAL_L20"/>
    <property type="match status" value="1"/>
</dbReference>